<organism>
    <name type="scientific">Caenorhabditis elegans</name>
    <dbReference type="NCBI Taxonomy" id="6239"/>
    <lineage>
        <taxon>Eukaryota</taxon>
        <taxon>Metazoa</taxon>
        <taxon>Ecdysozoa</taxon>
        <taxon>Nematoda</taxon>
        <taxon>Chromadorea</taxon>
        <taxon>Rhabditida</taxon>
        <taxon>Rhabditina</taxon>
        <taxon>Rhabditomorpha</taxon>
        <taxon>Rhabditoidea</taxon>
        <taxon>Rhabditidae</taxon>
        <taxon>Peloderinae</taxon>
        <taxon>Caenorhabditis</taxon>
    </lineage>
</organism>
<proteinExistence type="inferred from homology"/>
<reference key="1">
    <citation type="journal article" date="1998" name="Science">
        <title>Genome sequence of the nematode C. elegans: a platform for investigating biology.</title>
        <authorList>
            <consortium name="The C. elegans sequencing consortium"/>
        </authorList>
    </citation>
    <scope>NUCLEOTIDE SEQUENCE [LARGE SCALE GENOMIC DNA]</scope>
    <source>
        <strain>Bristol N2</strain>
    </source>
</reference>
<evidence type="ECO:0000255" key="1"/>
<evidence type="ECO:0000305" key="2"/>
<protein>
    <recommendedName>
        <fullName>ER membrane protein complex subunit 7 homolog</fullName>
    </recommendedName>
</protein>
<feature type="signal peptide" evidence="1">
    <location>
        <begin position="1"/>
        <end position="16"/>
    </location>
</feature>
<feature type="chain" id="PRO_0000065228" description="ER membrane protein complex subunit 7 homolog">
    <location>
        <begin position="17"/>
        <end position="222"/>
    </location>
</feature>
<feature type="topological domain" description="Extracellular" evidence="1">
    <location>
        <begin position="17"/>
        <end position="145"/>
    </location>
</feature>
<feature type="transmembrane region" description="Helical" evidence="1">
    <location>
        <begin position="146"/>
        <end position="166"/>
    </location>
</feature>
<feature type="topological domain" description="Cytoplasmic" evidence="1">
    <location>
        <begin position="167"/>
        <end position="222"/>
    </location>
</feature>
<gene>
    <name type="ORF">C35D10.1</name>
</gene>
<keyword id="KW-0472">Membrane</keyword>
<keyword id="KW-1185">Reference proteome</keyword>
<keyword id="KW-0732">Signal</keyword>
<keyword id="KW-0812">Transmembrane</keyword>
<keyword id="KW-1133">Transmembrane helix</keyword>
<accession>Q8WQG1</accession>
<accession>Q18491</accession>
<dbReference type="EMBL" id="FO080789">
    <property type="protein sequence ID" value="CCD66774.1"/>
    <property type="molecule type" value="Genomic_DNA"/>
</dbReference>
<dbReference type="RefSeq" id="NP_001033353.1">
    <property type="nucleotide sequence ID" value="NM_001038264.5"/>
</dbReference>
<dbReference type="SMR" id="Q8WQG1"/>
<dbReference type="FunCoup" id="Q8WQG1">
    <property type="interactions" value="2883"/>
</dbReference>
<dbReference type="STRING" id="6239.C35D10.1.1"/>
<dbReference type="PaxDb" id="6239-C35D10.1.2"/>
<dbReference type="PeptideAtlas" id="Q8WQG1"/>
<dbReference type="EnsemblMetazoa" id="C35D10.1.1">
    <property type="protein sequence ID" value="C35D10.1.1"/>
    <property type="gene ID" value="WBGene00016439"/>
</dbReference>
<dbReference type="GeneID" id="175651"/>
<dbReference type="KEGG" id="cel:CELE_C35D10.1"/>
<dbReference type="UCSC" id="C35D10.1">
    <property type="organism name" value="c. elegans"/>
</dbReference>
<dbReference type="AGR" id="WB:WBGene00016439"/>
<dbReference type="CTD" id="175651"/>
<dbReference type="WormBase" id="C35D10.1">
    <property type="protein sequence ID" value="CE29951"/>
    <property type="gene ID" value="WBGene00016439"/>
</dbReference>
<dbReference type="eggNOG" id="KOG3306">
    <property type="taxonomic scope" value="Eukaryota"/>
</dbReference>
<dbReference type="GeneTree" id="ENSGT00390000017490"/>
<dbReference type="HOGENOM" id="CLU_073620_1_0_1"/>
<dbReference type="InParanoid" id="Q8WQG1"/>
<dbReference type="OMA" id="EMENMQM"/>
<dbReference type="OrthoDB" id="336240at2759"/>
<dbReference type="PhylomeDB" id="Q8WQG1"/>
<dbReference type="PRO" id="PR:Q8WQG1"/>
<dbReference type="Proteomes" id="UP000001940">
    <property type="component" value="Chromosome III"/>
</dbReference>
<dbReference type="Bgee" id="WBGene00016439">
    <property type="expression patterns" value="Expressed in germ line (C elegans) and 4 other cell types or tissues"/>
</dbReference>
<dbReference type="GO" id="GO:0072546">
    <property type="term" value="C:EMC complex"/>
    <property type="evidence" value="ECO:0000318"/>
    <property type="project" value="GO_Central"/>
</dbReference>
<dbReference type="InterPro" id="IPR039163">
    <property type="entry name" value="EMC7"/>
</dbReference>
<dbReference type="InterPro" id="IPR019008">
    <property type="entry name" value="EMC7_beta_sandwich"/>
</dbReference>
<dbReference type="PANTHER" id="PTHR13605">
    <property type="entry name" value="ER MEMBRANE PROTEIN COMPLEX SUBUNIT 7"/>
    <property type="match status" value="1"/>
</dbReference>
<dbReference type="PANTHER" id="PTHR13605:SF4">
    <property type="entry name" value="ER MEMBRANE PROTEIN COMPLEX SUBUNIT 7"/>
    <property type="match status" value="1"/>
</dbReference>
<dbReference type="Pfam" id="PF09430">
    <property type="entry name" value="EMC7_beta-sandw"/>
    <property type="match status" value="1"/>
</dbReference>
<comment type="subcellular location">
    <subcellularLocation>
        <location evidence="2">Membrane</location>
        <topology evidence="2">Single-pass type I membrane protein</topology>
    </subcellularLocation>
</comment>
<comment type="similarity">
    <text evidence="2">Belongs to the EMC7 family.</text>
</comment>
<name>YLC1_CAEEL</name>
<sequence>MKSILLLFSLIVLGSATEEVSRTEQTSTLFSVEGEIALPSTRNCAKWSAGARIHLNHGQYMGFVRQDCTFRVDFVPTGTYIVQIENTDFVFEPIRVDITSKGKMRARKLTILQPNNVNTLPYPLRLSARGPARYFRKREEWRITDMLFSPMVLMLVVPLVVMLILPKMTANDPELKKEMENMQMPKVDMPDVGEMMANFFGGSAPAKKKAVTGGSGSGQRRK</sequence>